<reference key="1">
    <citation type="journal article" date="2006" name="BMC Genomics">
        <title>Complete genome sequence of Shigella flexneri 5b and comparison with Shigella flexneri 2a.</title>
        <authorList>
            <person name="Nie H."/>
            <person name="Yang F."/>
            <person name="Zhang X."/>
            <person name="Yang J."/>
            <person name="Chen L."/>
            <person name="Wang J."/>
            <person name="Xiong Z."/>
            <person name="Peng J."/>
            <person name="Sun L."/>
            <person name="Dong J."/>
            <person name="Xue Y."/>
            <person name="Xu X."/>
            <person name="Chen S."/>
            <person name="Yao Z."/>
            <person name="Shen Y."/>
            <person name="Jin Q."/>
        </authorList>
    </citation>
    <scope>NUCLEOTIDE SEQUENCE [LARGE SCALE GENOMIC DNA]</scope>
    <source>
        <strain>8401</strain>
    </source>
</reference>
<keyword id="KW-0963">Cytoplasm</keyword>
<keyword id="KW-0408">Iron</keyword>
<keyword id="KW-0479">Metal-binding</keyword>
<keyword id="KW-0346">Stress response</keyword>
<feature type="chain" id="PRO_0000291702" description="Iron-sulfur cluster repair protein YtfE">
    <location>
        <begin position="1"/>
        <end position="220"/>
    </location>
</feature>
<proteinExistence type="inferred from homology"/>
<evidence type="ECO:0000255" key="1">
    <source>
        <dbReference type="HAMAP-Rule" id="MF_01606"/>
    </source>
</evidence>
<sequence>MAYRDQPLGELALSIPRASALFRKYDMDYCCGGKQTLARAAARKELDVEVIEAELAKLAEQPIEKDWRSAPLAEIIDHIIVRYHDRHREQLPELILQATKVERVHADKPSVPKGLTKYLTMLHEELSSHMMKEEQILFPMIKQGMGSQAMGPISVMESEHDEAGELLEVIKHTTNNVTPPPEACTTWKAMYNGINELIDDLMDHISLENNVLFPRALAGE</sequence>
<comment type="function">
    <text evidence="1">Di-iron-containing protein involved in the repair of iron-sulfur clusters damaged by oxidative and nitrosative stress conditions.</text>
</comment>
<comment type="subunit">
    <text evidence="1">Homodimer.</text>
</comment>
<comment type="subcellular location">
    <subcellularLocation>
        <location evidence="1">Cytoplasm</location>
    </subcellularLocation>
</comment>
<comment type="similarity">
    <text evidence="1">Belongs to the RIC family. YtfE subfamily.</text>
</comment>
<name>YTFE_SHIF8</name>
<dbReference type="EMBL" id="CP000266">
    <property type="protein sequence ID" value="ABF06259.1"/>
    <property type="molecule type" value="Genomic_DNA"/>
</dbReference>
<dbReference type="RefSeq" id="WP_000331456.1">
    <property type="nucleotide sequence ID" value="NC_008258.1"/>
</dbReference>
<dbReference type="SMR" id="Q0SXF6"/>
<dbReference type="GeneID" id="93777612"/>
<dbReference type="KEGG" id="sfv:SFV_4278"/>
<dbReference type="HOGENOM" id="CLU_076075_2_0_6"/>
<dbReference type="Proteomes" id="UP000000659">
    <property type="component" value="Chromosome"/>
</dbReference>
<dbReference type="GO" id="GO:0005737">
    <property type="term" value="C:cytoplasm"/>
    <property type="evidence" value="ECO:0007669"/>
    <property type="project" value="UniProtKB-SubCell"/>
</dbReference>
<dbReference type="GO" id="GO:0046872">
    <property type="term" value="F:metal ion binding"/>
    <property type="evidence" value="ECO:0007669"/>
    <property type="project" value="UniProtKB-KW"/>
</dbReference>
<dbReference type="GO" id="GO:0030091">
    <property type="term" value="P:protein repair"/>
    <property type="evidence" value="ECO:0007669"/>
    <property type="project" value="UniProtKB-UniRule"/>
</dbReference>
<dbReference type="GO" id="GO:0051409">
    <property type="term" value="P:response to nitrosative stress"/>
    <property type="evidence" value="ECO:0007669"/>
    <property type="project" value="UniProtKB-UniRule"/>
</dbReference>
<dbReference type="GO" id="GO:0006979">
    <property type="term" value="P:response to oxidative stress"/>
    <property type="evidence" value="ECO:0007669"/>
    <property type="project" value="UniProtKB-UniRule"/>
</dbReference>
<dbReference type="CDD" id="cd12108">
    <property type="entry name" value="Hr-like"/>
    <property type="match status" value="1"/>
</dbReference>
<dbReference type="FunFam" id="1.20.120.520:FF:000001">
    <property type="entry name" value="Iron-sulfur cluster repair protein YtfE"/>
    <property type="match status" value="1"/>
</dbReference>
<dbReference type="Gene3D" id="1.20.120.520">
    <property type="entry name" value="nmb1532 protein domain like"/>
    <property type="match status" value="1"/>
</dbReference>
<dbReference type="HAMAP" id="MF_01606">
    <property type="entry name" value="RIC_YtfE"/>
    <property type="match status" value="1"/>
</dbReference>
<dbReference type="InterPro" id="IPR023742">
    <property type="entry name" value="FeS-repair_YftE"/>
</dbReference>
<dbReference type="InterPro" id="IPR012312">
    <property type="entry name" value="Hemerythrin-like"/>
</dbReference>
<dbReference type="InterPro" id="IPR019903">
    <property type="entry name" value="RIC_family"/>
</dbReference>
<dbReference type="NCBIfam" id="TIGR03652">
    <property type="entry name" value="FeS_repair_RIC"/>
    <property type="match status" value="1"/>
</dbReference>
<dbReference type="NCBIfam" id="NF008221">
    <property type="entry name" value="PRK10992.1"/>
    <property type="match status" value="1"/>
</dbReference>
<dbReference type="PANTHER" id="PTHR36438">
    <property type="entry name" value="IRON-SULFUR CLUSTER REPAIR PROTEIN YTFE"/>
    <property type="match status" value="1"/>
</dbReference>
<dbReference type="PANTHER" id="PTHR36438:SF1">
    <property type="entry name" value="IRON-SULFUR CLUSTER REPAIR PROTEIN YTFE"/>
    <property type="match status" value="1"/>
</dbReference>
<dbReference type="Pfam" id="PF01814">
    <property type="entry name" value="Hemerythrin"/>
    <property type="match status" value="1"/>
</dbReference>
<dbReference type="Pfam" id="PF04405">
    <property type="entry name" value="ScdA_N"/>
    <property type="match status" value="1"/>
</dbReference>
<accession>Q0SXF6</accession>
<gene>
    <name evidence="1" type="primary">ytfE</name>
    <name type="ordered locus">SFV_4278</name>
</gene>
<organism>
    <name type="scientific">Shigella flexneri serotype 5b (strain 8401)</name>
    <dbReference type="NCBI Taxonomy" id="373384"/>
    <lineage>
        <taxon>Bacteria</taxon>
        <taxon>Pseudomonadati</taxon>
        <taxon>Pseudomonadota</taxon>
        <taxon>Gammaproteobacteria</taxon>
        <taxon>Enterobacterales</taxon>
        <taxon>Enterobacteriaceae</taxon>
        <taxon>Shigella</taxon>
    </lineage>
</organism>
<protein>
    <recommendedName>
        <fullName evidence="1">Iron-sulfur cluster repair protein YtfE</fullName>
    </recommendedName>
</protein>